<reference key="1">
    <citation type="journal article" date="2004" name="Nature">
        <title>Genome evolution in yeasts.</title>
        <authorList>
            <person name="Dujon B."/>
            <person name="Sherman D."/>
            <person name="Fischer G."/>
            <person name="Durrens P."/>
            <person name="Casaregola S."/>
            <person name="Lafontaine I."/>
            <person name="de Montigny J."/>
            <person name="Marck C."/>
            <person name="Neuveglise C."/>
            <person name="Talla E."/>
            <person name="Goffard N."/>
            <person name="Frangeul L."/>
            <person name="Aigle M."/>
            <person name="Anthouard V."/>
            <person name="Babour A."/>
            <person name="Barbe V."/>
            <person name="Barnay S."/>
            <person name="Blanchin S."/>
            <person name="Beckerich J.-M."/>
            <person name="Beyne E."/>
            <person name="Bleykasten C."/>
            <person name="Boisrame A."/>
            <person name="Boyer J."/>
            <person name="Cattolico L."/>
            <person name="Confanioleri F."/>
            <person name="de Daruvar A."/>
            <person name="Despons L."/>
            <person name="Fabre E."/>
            <person name="Fairhead C."/>
            <person name="Ferry-Dumazet H."/>
            <person name="Groppi A."/>
            <person name="Hantraye F."/>
            <person name="Hennequin C."/>
            <person name="Jauniaux N."/>
            <person name="Joyet P."/>
            <person name="Kachouri R."/>
            <person name="Kerrest A."/>
            <person name="Koszul R."/>
            <person name="Lemaire M."/>
            <person name="Lesur I."/>
            <person name="Ma L."/>
            <person name="Muller H."/>
            <person name="Nicaud J.-M."/>
            <person name="Nikolski M."/>
            <person name="Oztas S."/>
            <person name="Ozier-Kalogeropoulos O."/>
            <person name="Pellenz S."/>
            <person name="Potier S."/>
            <person name="Richard G.-F."/>
            <person name="Straub M.-L."/>
            <person name="Suleau A."/>
            <person name="Swennen D."/>
            <person name="Tekaia F."/>
            <person name="Wesolowski-Louvel M."/>
            <person name="Westhof E."/>
            <person name="Wirth B."/>
            <person name="Zeniou-Meyer M."/>
            <person name="Zivanovic Y."/>
            <person name="Bolotin-Fukuhara M."/>
            <person name="Thierry A."/>
            <person name="Bouchier C."/>
            <person name="Caudron B."/>
            <person name="Scarpelli C."/>
            <person name="Gaillardin C."/>
            <person name="Weissenbach J."/>
            <person name="Wincker P."/>
            <person name="Souciet J.-L."/>
        </authorList>
    </citation>
    <scope>NUCLEOTIDE SEQUENCE [LARGE SCALE GENOMIC DNA]</scope>
    <source>
        <strain>ATCC 2001 / BCRC 20586 / JCM 3761 / NBRC 0622 / NRRL Y-65 / CBS 138</strain>
    </source>
</reference>
<evidence type="ECO:0000250" key="1"/>
<evidence type="ECO:0000305" key="2"/>
<comment type="function">
    <text evidence="1">Component of the Mediator complex, a coactivator involved in the regulated transcription of nearly all RNA polymerase II-dependent genes. Mediator functions as a bridge to convey information from gene-specific regulatory proteins to the basal RNA polymerase II transcription machinery. Mediator is recruited to promoters by direct interactions with regulatory proteins and serves as a scaffold for the assembly of a functional preinitiation complex with RNA polymerase II and the general transcription factors (By similarity).</text>
</comment>
<comment type="subunit">
    <text evidence="1">Component of the Mediator complex.</text>
</comment>
<comment type="subcellular location">
    <subcellularLocation>
        <location evidence="1">Nucleus</location>
    </subcellularLocation>
</comment>
<comment type="similarity">
    <text evidence="2">Belongs to the Mediator complex subunit 31 family.</text>
</comment>
<dbReference type="EMBL" id="CR380955">
    <property type="protein sequence ID" value="CAG60203.1"/>
    <property type="molecule type" value="Genomic_DNA"/>
</dbReference>
<dbReference type="RefSeq" id="XP_447266.1">
    <property type="nucleotide sequence ID" value="XM_447266.1"/>
</dbReference>
<dbReference type="SMR" id="Q6FR78"/>
<dbReference type="FunCoup" id="Q6FR78">
    <property type="interactions" value="144"/>
</dbReference>
<dbReference type="STRING" id="284593.Q6FR78"/>
<dbReference type="EnsemblFungi" id="CAGL0I00308g-T">
    <property type="protein sequence ID" value="CAGL0I00308g-T-p1"/>
    <property type="gene ID" value="CAGL0I00308g"/>
</dbReference>
<dbReference type="KEGG" id="cgr:2889312"/>
<dbReference type="CGD" id="CAL0132110">
    <property type="gene designation" value="CAGL0I00308g"/>
</dbReference>
<dbReference type="VEuPathDB" id="FungiDB:B1J91_I00308g"/>
<dbReference type="VEuPathDB" id="FungiDB:CAGL0I00308g"/>
<dbReference type="eggNOG" id="KOG4086">
    <property type="taxonomic scope" value="Eukaryota"/>
</dbReference>
<dbReference type="HOGENOM" id="CLU_147521_0_0_1"/>
<dbReference type="InParanoid" id="Q6FR78"/>
<dbReference type="OMA" id="YLEYWCE"/>
<dbReference type="Proteomes" id="UP000002428">
    <property type="component" value="Chromosome I"/>
</dbReference>
<dbReference type="GO" id="GO:0070847">
    <property type="term" value="C:core mediator complex"/>
    <property type="evidence" value="ECO:0007669"/>
    <property type="project" value="EnsemblFungi"/>
</dbReference>
<dbReference type="GO" id="GO:0016592">
    <property type="term" value="C:mediator complex"/>
    <property type="evidence" value="ECO:0007669"/>
    <property type="project" value="InterPro"/>
</dbReference>
<dbReference type="GO" id="GO:0003713">
    <property type="term" value="F:transcription coactivator activity"/>
    <property type="evidence" value="ECO:0007669"/>
    <property type="project" value="EnsemblFungi"/>
</dbReference>
<dbReference type="GO" id="GO:0006281">
    <property type="term" value="P:DNA repair"/>
    <property type="evidence" value="ECO:0007669"/>
    <property type="project" value="EnsemblFungi"/>
</dbReference>
<dbReference type="GO" id="GO:0006311">
    <property type="term" value="P:meiotic gene conversion"/>
    <property type="evidence" value="ECO:0007669"/>
    <property type="project" value="EnsemblFungi"/>
</dbReference>
<dbReference type="GO" id="GO:0032968">
    <property type="term" value="P:positive regulation of transcription elongation by RNA polymerase II"/>
    <property type="evidence" value="ECO:0007669"/>
    <property type="project" value="EnsemblFungi"/>
</dbReference>
<dbReference type="GO" id="GO:0060261">
    <property type="term" value="P:positive regulation of transcription initiation by RNA polymerase II"/>
    <property type="evidence" value="ECO:0007669"/>
    <property type="project" value="EnsemblFungi"/>
</dbReference>
<dbReference type="GO" id="GO:0051123">
    <property type="term" value="P:RNA polymerase II preinitiation complex assembly"/>
    <property type="evidence" value="ECO:0007669"/>
    <property type="project" value="EnsemblFungi"/>
</dbReference>
<dbReference type="Gene3D" id="1.10.10.1340">
    <property type="entry name" value="Mediator of RNA polymerase II, submodule Med31 (Soh1)"/>
    <property type="match status" value="1"/>
</dbReference>
<dbReference type="InterPro" id="IPR038089">
    <property type="entry name" value="Med31_sf"/>
</dbReference>
<dbReference type="InterPro" id="IPR008831">
    <property type="entry name" value="Mediator_Med31"/>
</dbReference>
<dbReference type="PANTHER" id="PTHR13186">
    <property type="entry name" value="MEDIATOR OF RNA POLYMERASE II TRANSCRIPTION SUBUNIT 31"/>
    <property type="match status" value="1"/>
</dbReference>
<dbReference type="Pfam" id="PF05669">
    <property type="entry name" value="Med31"/>
    <property type="match status" value="1"/>
</dbReference>
<keyword id="KW-0010">Activator</keyword>
<keyword id="KW-0539">Nucleus</keyword>
<keyword id="KW-1185">Reference proteome</keyword>
<keyword id="KW-0804">Transcription</keyword>
<keyword id="KW-0805">Transcription regulation</keyword>
<proteinExistence type="inferred from homology"/>
<organism>
    <name type="scientific">Candida glabrata (strain ATCC 2001 / BCRC 20586 / JCM 3761 / NBRC 0622 / NRRL Y-65 / CBS 138)</name>
    <name type="common">Yeast</name>
    <name type="synonym">Nakaseomyces glabratus</name>
    <dbReference type="NCBI Taxonomy" id="284593"/>
    <lineage>
        <taxon>Eukaryota</taxon>
        <taxon>Fungi</taxon>
        <taxon>Dikarya</taxon>
        <taxon>Ascomycota</taxon>
        <taxon>Saccharomycotina</taxon>
        <taxon>Saccharomycetes</taxon>
        <taxon>Saccharomycetales</taxon>
        <taxon>Saccharomycetaceae</taxon>
        <taxon>Nakaseomyces</taxon>
    </lineage>
</organism>
<gene>
    <name type="primary">SOH1</name>
    <name type="synonym">MED31</name>
    <name type="ordered locus">CAGL0I00308g</name>
</gene>
<sequence>MSDNKEDSTVDNSNSTEEVPLPTRFEVELEFVQSLANIPYVTYLLTQQQLLWKDPKFKNYLKYLEYWCEPPYAQCIVYPNALFILKLLNGFMEKATVNEDGLLDGLEDLPKVIQLQGNQWMNEMVERWAN</sequence>
<feature type="chain" id="PRO_0000305720" description="Mediator of RNA polymerase II transcription subunit 31">
    <location>
        <begin position="1"/>
        <end position="130"/>
    </location>
</feature>
<protein>
    <recommendedName>
        <fullName>Mediator of RNA polymerase II transcription subunit 31</fullName>
    </recommendedName>
    <alternativeName>
        <fullName>Mediator complex subunit 31</fullName>
    </alternativeName>
</protein>
<name>MED31_CANGA</name>
<accession>Q6FR78</accession>